<comment type="function">
    <text evidence="1">Affects the rate of fibrils formation. May have a primary role in collagen fibrillogenesis (By similarity).</text>
</comment>
<comment type="subunit">
    <text evidence="1">Binds to type I and type II collagen.</text>
</comment>
<comment type="subcellular location">
    <subcellularLocation>
        <location>Secreted</location>
        <location>Extracellular space</location>
        <location>Extracellular matrix</location>
    </subcellularLocation>
</comment>
<comment type="PTM">
    <text evidence="1">Binds keratan sulfate chains.</text>
</comment>
<comment type="similarity">
    <text evidence="3">Belongs to the small leucine-rich proteoglycan (SLRP) family. SLRP class II subfamily.</text>
</comment>
<proteinExistence type="evidence at transcript level"/>
<dbReference type="EMBL" id="U34977">
    <property type="protein sequence ID" value="AAC60016.1"/>
    <property type="molecule type" value="mRNA"/>
</dbReference>
<dbReference type="PIR" id="S71876">
    <property type="entry name" value="S71876"/>
</dbReference>
<dbReference type="RefSeq" id="NP_990298.1">
    <property type="nucleotide sequence ID" value="NM_204967.1"/>
</dbReference>
<dbReference type="SMR" id="P51887"/>
<dbReference type="FunCoup" id="P51887">
    <property type="interactions" value="42"/>
</dbReference>
<dbReference type="STRING" id="9031.ENSGALP00000043794"/>
<dbReference type="GlyCosmos" id="P51887">
    <property type="glycosylation" value="6 sites, No reported glycans"/>
</dbReference>
<dbReference type="GlyGen" id="P51887">
    <property type="glycosylation" value="6 sites"/>
</dbReference>
<dbReference type="PaxDb" id="9031-ENSGALP00000005598"/>
<dbReference type="GeneID" id="395814"/>
<dbReference type="KEGG" id="gga:395814"/>
<dbReference type="CTD" id="2331"/>
<dbReference type="VEuPathDB" id="HostDB:geneid_395814"/>
<dbReference type="eggNOG" id="KOG0619">
    <property type="taxonomic scope" value="Eukaryota"/>
</dbReference>
<dbReference type="InParanoid" id="P51887"/>
<dbReference type="OrthoDB" id="1668230at2759"/>
<dbReference type="PhylomeDB" id="P51887"/>
<dbReference type="PRO" id="PR:P51887"/>
<dbReference type="Proteomes" id="UP000000539">
    <property type="component" value="Unassembled WGS sequence"/>
</dbReference>
<dbReference type="GO" id="GO:0005615">
    <property type="term" value="C:extracellular space"/>
    <property type="evidence" value="ECO:0000318"/>
    <property type="project" value="GO_Central"/>
</dbReference>
<dbReference type="FunFam" id="3.80.10.10:FF:000073">
    <property type="entry name" value="Lumican"/>
    <property type="match status" value="1"/>
</dbReference>
<dbReference type="Gene3D" id="3.80.10.10">
    <property type="entry name" value="Ribonuclease Inhibitor"/>
    <property type="match status" value="3"/>
</dbReference>
<dbReference type="InterPro" id="IPR001611">
    <property type="entry name" value="Leu-rich_rpt"/>
</dbReference>
<dbReference type="InterPro" id="IPR003591">
    <property type="entry name" value="Leu-rich_rpt_typical-subtyp"/>
</dbReference>
<dbReference type="InterPro" id="IPR032675">
    <property type="entry name" value="LRR_dom_sf"/>
</dbReference>
<dbReference type="InterPro" id="IPR000372">
    <property type="entry name" value="LRRNT"/>
</dbReference>
<dbReference type="InterPro" id="IPR050333">
    <property type="entry name" value="SLRP"/>
</dbReference>
<dbReference type="PANTHER" id="PTHR45712">
    <property type="entry name" value="AGAP008170-PA"/>
    <property type="match status" value="1"/>
</dbReference>
<dbReference type="PANTHER" id="PTHR45712:SF4">
    <property type="entry name" value="FIBROMODULIN"/>
    <property type="match status" value="1"/>
</dbReference>
<dbReference type="Pfam" id="PF00560">
    <property type="entry name" value="LRR_1"/>
    <property type="match status" value="1"/>
</dbReference>
<dbReference type="Pfam" id="PF13855">
    <property type="entry name" value="LRR_8"/>
    <property type="match status" value="3"/>
</dbReference>
<dbReference type="Pfam" id="PF01462">
    <property type="entry name" value="LRRNT"/>
    <property type="match status" value="1"/>
</dbReference>
<dbReference type="SMART" id="SM00364">
    <property type="entry name" value="LRR_BAC"/>
    <property type="match status" value="4"/>
</dbReference>
<dbReference type="SMART" id="SM00365">
    <property type="entry name" value="LRR_SD22"/>
    <property type="match status" value="4"/>
</dbReference>
<dbReference type="SMART" id="SM00369">
    <property type="entry name" value="LRR_TYP"/>
    <property type="match status" value="8"/>
</dbReference>
<dbReference type="SMART" id="SM00013">
    <property type="entry name" value="LRRNT"/>
    <property type="match status" value="1"/>
</dbReference>
<dbReference type="SUPFAM" id="SSF52058">
    <property type="entry name" value="L domain-like"/>
    <property type="match status" value="1"/>
</dbReference>
<dbReference type="PROSITE" id="PS51450">
    <property type="entry name" value="LRR"/>
    <property type="match status" value="9"/>
</dbReference>
<accession>P51887</accession>
<name>FMOD_CHICK</name>
<gene>
    <name type="primary">FMOD</name>
</gene>
<protein>
    <recommendedName>
        <fullName>Fibromodulin</fullName>
        <shortName>FM</shortName>
    </recommendedName>
    <alternativeName>
        <fullName>Keratan sulfate proteoglycan fibromodulin</fullName>
        <shortName>KSPG fibromodulin</shortName>
    </alternativeName>
</protein>
<reference key="1">
    <citation type="journal article" date="1996" name="Biochem. J.">
        <title>Differential expression of fibromodulin mRNA associated with tendon fibril growth: isolation and characterization of a chicken fibromodulin cDNA.</title>
        <authorList>
            <person name="Nurminskaya M.V."/>
            <person name="Birk D.E."/>
        </authorList>
    </citation>
    <scope>NUCLEOTIDE SEQUENCE [MRNA]</scope>
    <source>
        <tissue>Tendon</tissue>
    </source>
</reference>
<organism>
    <name type="scientific">Gallus gallus</name>
    <name type="common">Chicken</name>
    <dbReference type="NCBI Taxonomy" id="9031"/>
    <lineage>
        <taxon>Eukaryota</taxon>
        <taxon>Metazoa</taxon>
        <taxon>Chordata</taxon>
        <taxon>Craniata</taxon>
        <taxon>Vertebrata</taxon>
        <taxon>Euteleostomi</taxon>
        <taxon>Archelosauria</taxon>
        <taxon>Archosauria</taxon>
        <taxon>Dinosauria</taxon>
        <taxon>Saurischia</taxon>
        <taxon>Theropoda</taxon>
        <taxon>Coelurosauria</taxon>
        <taxon>Aves</taxon>
        <taxon>Neognathae</taxon>
        <taxon>Galloanserae</taxon>
        <taxon>Galliformes</taxon>
        <taxon>Phasianidae</taxon>
        <taxon>Phasianinae</taxon>
        <taxon>Gallus</taxon>
    </lineage>
</organism>
<keyword id="KW-1015">Disulfide bond</keyword>
<keyword id="KW-0272">Extracellular matrix</keyword>
<keyword id="KW-0325">Glycoprotein</keyword>
<keyword id="KW-0433">Leucine-rich repeat</keyword>
<keyword id="KW-0654">Proteoglycan</keyword>
<keyword id="KW-1185">Reference proteome</keyword>
<keyword id="KW-0677">Repeat</keyword>
<keyword id="KW-0964">Secreted</keyword>
<keyword id="KW-0732">Signal</keyword>
<sequence>MRWANILLVAGLCRASLGQYNEEEDLAWLQYYMRQSRMSSYNYMPYYEDENSPYVYSYVPAPDTEAEPVPEAQQASSWQCPQECDCPPNFSSAMYCDTRNLRYLPFVPTRMKYVYFQNNQITAIQEGAFDNATELEWLALHNNQISSEKMGKRVFAKLKNLERLYMNNNNLTKMPSPLPRSLRELHLSYNQISKVPSNALEGLENLTALYLSHNYIFEMGASLKGLKSLILADLSYNHLRKVPDGLPMALEQLYLEYNYINAIPDDYFKVSPKLLYVRMSHNSLTNQGLSTNTFNSSSILELDLSYNRLQKIPRVSTNLENLYLQGNQINEFSISSFCTVVDVMNYSRLQVLRLDGNEIKRNAMPPDAPLCLRRATVIEI</sequence>
<feature type="signal peptide" evidence="1">
    <location>
        <begin position="1"/>
        <end position="18"/>
    </location>
</feature>
<feature type="chain" id="PRO_0000032742" description="Fibromodulin">
    <location>
        <begin position="19"/>
        <end position="380"/>
    </location>
</feature>
<feature type="domain" description="LRRNT">
    <location>
        <begin position="71"/>
        <end position="109"/>
    </location>
</feature>
<feature type="repeat" description="LRR 1">
    <location>
        <begin position="110"/>
        <end position="131"/>
    </location>
</feature>
<feature type="repeat" description="LRR 2">
    <location>
        <begin position="134"/>
        <end position="147"/>
    </location>
</feature>
<feature type="repeat" description="LRR 3">
    <location>
        <begin position="160"/>
        <end position="180"/>
    </location>
</feature>
<feature type="repeat" description="LRR 4">
    <location>
        <begin position="181"/>
        <end position="202"/>
    </location>
</feature>
<feature type="repeat" description="LRR 5">
    <location>
        <begin position="205"/>
        <end position="227"/>
    </location>
</feature>
<feature type="repeat" description="LRR 6">
    <location>
        <begin position="228"/>
        <end position="248"/>
    </location>
</feature>
<feature type="repeat" description="LRR 7">
    <location>
        <begin position="249"/>
        <end position="270"/>
    </location>
</feature>
<feature type="repeat" description="LRR 8">
    <location>
        <begin position="273"/>
        <end position="293"/>
    </location>
</feature>
<feature type="repeat" description="LRR 9">
    <location>
        <begin position="298"/>
        <end position="317"/>
    </location>
</feature>
<feature type="repeat" description="LRR 10">
    <location>
        <begin position="318"/>
        <end position="339"/>
    </location>
</feature>
<feature type="repeat" description="LRR 11">
    <location>
        <begin position="348"/>
        <end position="371"/>
    </location>
</feature>
<feature type="glycosylation site" description="N-linked (GlcNAc...) asparagine" evidence="2">
    <location>
        <position position="89"/>
    </location>
</feature>
<feature type="glycosylation site" description="N-linked (GlcNAc...) (keratan sulfate) asparagine" evidence="1">
    <location>
        <position position="131"/>
    </location>
</feature>
<feature type="glycosylation site" description="N-linked (GlcNAc...) (keratan sulfate) asparagine" evidence="1">
    <location>
        <position position="170"/>
    </location>
</feature>
<feature type="glycosylation site" description="N-linked (GlcNAc...) (keratan sulfate) asparagine" evidence="1">
    <location>
        <position position="205"/>
    </location>
</feature>
<feature type="glycosylation site" description="N-linked (GlcNAc...) (keratan sulfate) asparagine" evidence="1">
    <location>
        <position position="295"/>
    </location>
</feature>
<feature type="glycosylation site" description="N-linked (GlcNAc...) asparagine" evidence="2">
    <location>
        <position position="345"/>
    </location>
</feature>
<feature type="disulfide bond" evidence="1">
    <location>
        <begin position="338"/>
        <end position="371"/>
    </location>
</feature>
<evidence type="ECO:0000250" key="1"/>
<evidence type="ECO:0000255" key="2"/>
<evidence type="ECO:0000305" key="3"/>